<feature type="chain" id="PRO_1000116378" description="Phosphate acyltransferase">
    <location>
        <begin position="1"/>
        <end position="356"/>
    </location>
</feature>
<comment type="function">
    <text evidence="1">Catalyzes the reversible formation of acyl-phosphate (acyl-PO(4)) from acyl-[acyl-carrier-protein] (acyl-ACP). This enzyme utilizes acyl-ACP as fatty acyl donor, but not acyl-CoA.</text>
</comment>
<comment type="catalytic activity">
    <reaction evidence="1">
        <text>a fatty acyl-[ACP] + phosphate = an acyl phosphate + holo-[ACP]</text>
        <dbReference type="Rhea" id="RHEA:42292"/>
        <dbReference type="Rhea" id="RHEA-COMP:9685"/>
        <dbReference type="Rhea" id="RHEA-COMP:14125"/>
        <dbReference type="ChEBI" id="CHEBI:43474"/>
        <dbReference type="ChEBI" id="CHEBI:59918"/>
        <dbReference type="ChEBI" id="CHEBI:64479"/>
        <dbReference type="ChEBI" id="CHEBI:138651"/>
        <dbReference type="EC" id="2.3.1.274"/>
    </reaction>
</comment>
<comment type="pathway">
    <text evidence="1">Lipid metabolism; phospholipid metabolism.</text>
</comment>
<comment type="subunit">
    <text evidence="1">Homodimer. Probably interacts with PlsY.</text>
</comment>
<comment type="subcellular location">
    <subcellularLocation>
        <location evidence="1">Cytoplasm</location>
    </subcellularLocation>
    <text evidence="1">Associated with the membrane possibly through PlsY.</text>
</comment>
<comment type="similarity">
    <text evidence="1">Belongs to the PlsX family.</text>
</comment>
<name>PLSX_ECO8A</name>
<evidence type="ECO:0000255" key="1">
    <source>
        <dbReference type="HAMAP-Rule" id="MF_00019"/>
    </source>
</evidence>
<sequence>MTRLTLALDVMGGDFGPSVTVPAALQALNSNSQLTLLLVGNPDAITPLLAKADFEQRSRLQIIPAQSVIASDARPSQAIRASRGSSMRVALELVKEGRAQACVSAGNTGALMGLAKLLLKPLEGIERPALVTVLPHQQKGKTVVLDLGANVDCDSTMLVQFAIMGSVLAEEVVEIPNPRVALLNIGEEEVKGLDSIRDASAVLKTIPSINYIGYLEANELLTGKTDVLVCDGFTGNVTLKTMEGVVRMFLSLLKSQGEGKKRSWWLLLLKRWLQKSLTRRFSHLNPDQYNGACLLGLRGTVIKSHGAANQRAFAVAIEQAVQAVQRQVPQRIAARLESVYPAGFELLDGGKSGTLR</sequence>
<proteinExistence type="inferred from homology"/>
<organism>
    <name type="scientific">Escherichia coli O8 (strain IAI1)</name>
    <dbReference type="NCBI Taxonomy" id="585034"/>
    <lineage>
        <taxon>Bacteria</taxon>
        <taxon>Pseudomonadati</taxon>
        <taxon>Pseudomonadota</taxon>
        <taxon>Gammaproteobacteria</taxon>
        <taxon>Enterobacterales</taxon>
        <taxon>Enterobacteriaceae</taxon>
        <taxon>Escherichia</taxon>
    </lineage>
</organism>
<keyword id="KW-0963">Cytoplasm</keyword>
<keyword id="KW-0444">Lipid biosynthesis</keyword>
<keyword id="KW-0443">Lipid metabolism</keyword>
<keyword id="KW-0594">Phospholipid biosynthesis</keyword>
<keyword id="KW-1208">Phospholipid metabolism</keyword>
<keyword id="KW-0808">Transferase</keyword>
<gene>
    <name evidence="1" type="primary">plsX</name>
    <name type="ordered locus">ECIAI1_1125</name>
</gene>
<reference key="1">
    <citation type="journal article" date="2009" name="PLoS Genet.">
        <title>Organised genome dynamics in the Escherichia coli species results in highly diverse adaptive paths.</title>
        <authorList>
            <person name="Touchon M."/>
            <person name="Hoede C."/>
            <person name="Tenaillon O."/>
            <person name="Barbe V."/>
            <person name="Baeriswyl S."/>
            <person name="Bidet P."/>
            <person name="Bingen E."/>
            <person name="Bonacorsi S."/>
            <person name="Bouchier C."/>
            <person name="Bouvet O."/>
            <person name="Calteau A."/>
            <person name="Chiapello H."/>
            <person name="Clermont O."/>
            <person name="Cruveiller S."/>
            <person name="Danchin A."/>
            <person name="Diard M."/>
            <person name="Dossat C."/>
            <person name="Karoui M.E."/>
            <person name="Frapy E."/>
            <person name="Garry L."/>
            <person name="Ghigo J.M."/>
            <person name="Gilles A.M."/>
            <person name="Johnson J."/>
            <person name="Le Bouguenec C."/>
            <person name="Lescat M."/>
            <person name="Mangenot S."/>
            <person name="Martinez-Jehanne V."/>
            <person name="Matic I."/>
            <person name="Nassif X."/>
            <person name="Oztas S."/>
            <person name="Petit M.A."/>
            <person name="Pichon C."/>
            <person name="Rouy Z."/>
            <person name="Ruf C.S."/>
            <person name="Schneider D."/>
            <person name="Tourret J."/>
            <person name="Vacherie B."/>
            <person name="Vallenet D."/>
            <person name="Medigue C."/>
            <person name="Rocha E.P.C."/>
            <person name="Denamur E."/>
        </authorList>
    </citation>
    <scope>NUCLEOTIDE SEQUENCE [LARGE SCALE GENOMIC DNA]</scope>
    <source>
        <strain>IAI1</strain>
    </source>
</reference>
<dbReference type="EC" id="2.3.1.274" evidence="1"/>
<dbReference type="EMBL" id="CU928160">
    <property type="protein sequence ID" value="CAQ97989.1"/>
    <property type="molecule type" value="Genomic_DNA"/>
</dbReference>
<dbReference type="RefSeq" id="WP_000197578.1">
    <property type="nucleotide sequence ID" value="NC_011741.1"/>
</dbReference>
<dbReference type="SMR" id="B7LX24"/>
<dbReference type="GeneID" id="93776318"/>
<dbReference type="KEGG" id="ecr:ECIAI1_1125"/>
<dbReference type="HOGENOM" id="CLU_039379_1_0_6"/>
<dbReference type="UniPathway" id="UPA00085"/>
<dbReference type="GO" id="GO:0005737">
    <property type="term" value="C:cytoplasm"/>
    <property type="evidence" value="ECO:0007669"/>
    <property type="project" value="UniProtKB-SubCell"/>
</dbReference>
<dbReference type="GO" id="GO:0043811">
    <property type="term" value="F:phosphate:acyl-[acyl carrier protein] acyltransferase activity"/>
    <property type="evidence" value="ECO:0007669"/>
    <property type="project" value="UniProtKB-UniRule"/>
</dbReference>
<dbReference type="GO" id="GO:0006633">
    <property type="term" value="P:fatty acid biosynthetic process"/>
    <property type="evidence" value="ECO:0007669"/>
    <property type="project" value="UniProtKB-UniRule"/>
</dbReference>
<dbReference type="GO" id="GO:0008654">
    <property type="term" value="P:phospholipid biosynthetic process"/>
    <property type="evidence" value="ECO:0007669"/>
    <property type="project" value="UniProtKB-KW"/>
</dbReference>
<dbReference type="FunFam" id="3.40.718.10:FF:000008">
    <property type="entry name" value="Phosphate acyltransferase"/>
    <property type="match status" value="1"/>
</dbReference>
<dbReference type="Gene3D" id="3.40.718.10">
    <property type="entry name" value="Isopropylmalate Dehydrogenase"/>
    <property type="match status" value="1"/>
</dbReference>
<dbReference type="HAMAP" id="MF_00019">
    <property type="entry name" value="PlsX"/>
    <property type="match status" value="1"/>
</dbReference>
<dbReference type="InterPro" id="IPR003664">
    <property type="entry name" value="FA_synthesis"/>
</dbReference>
<dbReference type="InterPro" id="IPR012281">
    <property type="entry name" value="Phospholipid_synth_PlsX-like"/>
</dbReference>
<dbReference type="NCBIfam" id="TIGR00182">
    <property type="entry name" value="plsX"/>
    <property type="match status" value="1"/>
</dbReference>
<dbReference type="PANTHER" id="PTHR30100">
    <property type="entry name" value="FATTY ACID/PHOSPHOLIPID SYNTHESIS PROTEIN PLSX"/>
    <property type="match status" value="1"/>
</dbReference>
<dbReference type="PANTHER" id="PTHR30100:SF1">
    <property type="entry name" value="PHOSPHATE ACYLTRANSFERASE"/>
    <property type="match status" value="1"/>
</dbReference>
<dbReference type="Pfam" id="PF02504">
    <property type="entry name" value="FA_synthesis"/>
    <property type="match status" value="1"/>
</dbReference>
<dbReference type="PIRSF" id="PIRSF002465">
    <property type="entry name" value="Phsphlp_syn_PlsX"/>
    <property type="match status" value="1"/>
</dbReference>
<dbReference type="SUPFAM" id="SSF53659">
    <property type="entry name" value="Isocitrate/Isopropylmalate dehydrogenase-like"/>
    <property type="match status" value="1"/>
</dbReference>
<protein>
    <recommendedName>
        <fullName evidence="1">Phosphate acyltransferase</fullName>
        <ecNumber evidence="1">2.3.1.274</ecNumber>
    </recommendedName>
    <alternativeName>
        <fullName evidence="1">Acyl-ACP phosphotransacylase</fullName>
    </alternativeName>
    <alternativeName>
        <fullName evidence="1">Acyl-[acyl-carrier-protein]--phosphate acyltransferase</fullName>
    </alternativeName>
    <alternativeName>
        <fullName evidence="1">Phosphate-acyl-ACP acyltransferase</fullName>
    </alternativeName>
</protein>
<accession>B7LX24</accession>